<sequence length="263" mass="28455">MKNKNVIQKMREKTPLIHCITNYVTINDCANILLSFGASPAMCEAYDEVYDFVSISSALYINLGTLTKEQETAAVLASISAKNHNVPVVIDPVGCPAIKRKVEVINRIAEVGRIDIIKGNIGEIKFLAGMDSETRGVDSLDNGENALDACTQLAKKYNCIVAATGEKDFVSDGKRGSVIKNGTEMLTKVTGAGCMLGALCAATCANFEDKLVSTTAAILSMNIAGEKAYEEAQLPGSFRIALIDNIYMISDEEIWERGNVEWK</sequence>
<name>THIM1_CLOB1</name>
<dbReference type="EC" id="2.7.1.50" evidence="1"/>
<dbReference type="EMBL" id="CP000726">
    <property type="protein sequence ID" value="ABS34277.1"/>
    <property type="molecule type" value="Genomic_DNA"/>
</dbReference>
<dbReference type="SMR" id="A7FPT1"/>
<dbReference type="KEGG" id="cba:CLB_0491"/>
<dbReference type="HOGENOM" id="CLU_019943_0_0_9"/>
<dbReference type="UniPathway" id="UPA00060">
    <property type="reaction ID" value="UER00139"/>
</dbReference>
<dbReference type="GO" id="GO:0005524">
    <property type="term" value="F:ATP binding"/>
    <property type="evidence" value="ECO:0007669"/>
    <property type="project" value="UniProtKB-UniRule"/>
</dbReference>
<dbReference type="GO" id="GO:0004417">
    <property type="term" value="F:hydroxyethylthiazole kinase activity"/>
    <property type="evidence" value="ECO:0007669"/>
    <property type="project" value="UniProtKB-UniRule"/>
</dbReference>
<dbReference type="GO" id="GO:0000287">
    <property type="term" value="F:magnesium ion binding"/>
    <property type="evidence" value="ECO:0007669"/>
    <property type="project" value="UniProtKB-UniRule"/>
</dbReference>
<dbReference type="GO" id="GO:0009228">
    <property type="term" value="P:thiamine biosynthetic process"/>
    <property type="evidence" value="ECO:0007669"/>
    <property type="project" value="UniProtKB-KW"/>
</dbReference>
<dbReference type="GO" id="GO:0009229">
    <property type="term" value="P:thiamine diphosphate biosynthetic process"/>
    <property type="evidence" value="ECO:0007669"/>
    <property type="project" value="UniProtKB-UniRule"/>
</dbReference>
<dbReference type="CDD" id="cd01170">
    <property type="entry name" value="THZ_kinase"/>
    <property type="match status" value="1"/>
</dbReference>
<dbReference type="Gene3D" id="3.40.1190.20">
    <property type="match status" value="1"/>
</dbReference>
<dbReference type="HAMAP" id="MF_00228">
    <property type="entry name" value="Thz_kinase"/>
    <property type="match status" value="1"/>
</dbReference>
<dbReference type="InterPro" id="IPR000417">
    <property type="entry name" value="Hyethyz_kinase"/>
</dbReference>
<dbReference type="InterPro" id="IPR029056">
    <property type="entry name" value="Ribokinase-like"/>
</dbReference>
<dbReference type="NCBIfam" id="NF006830">
    <property type="entry name" value="PRK09355.1"/>
    <property type="match status" value="1"/>
</dbReference>
<dbReference type="NCBIfam" id="TIGR00694">
    <property type="entry name" value="thiM"/>
    <property type="match status" value="1"/>
</dbReference>
<dbReference type="Pfam" id="PF02110">
    <property type="entry name" value="HK"/>
    <property type="match status" value="1"/>
</dbReference>
<dbReference type="PIRSF" id="PIRSF000513">
    <property type="entry name" value="Thz_kinase"/>
    <property type="match status" value="1"/>
</dbReference>
<dbReference type="PRINTS" id="PR01099">
    <property type="entry name" value="HYETHTZKNASE"/>
</dbReference>
<dbReference type="SUPFAM" id="SSF53613">
    <property type="entry name" value="Ribokinase-like"/>
    <property type="match status" value="1"/>
</dbReference>
<feature type="chain" id="PRO_0000336547" description="Hydroxyethylthiazole kinase 1">
    <location>
        <begin position="1"/>
        <end position="263"/>
    </location>
</feature>
<feature type="binding site" evidence="1">
    <location>
        <position position="42"/>
    </location>
    <ligand>
        <name>substrate</name>
    </ligand>
</feature>
<feature type="binding site" evidence="1">
    <location>
        <position position="118"/>
    </location>
    <ligand>
        <name>ATP</name>
        <dbReference type="ChEBI" id="CHEBI:30616"/>
    </ligand>
</feature>
<feature type="binding site" evidence="1">
    <location>
        <position position="164"/>
    </location>
    <ligand>
        <name>ATP</name>
        <dbReference type="ChEBI" id="CHEBI:30616"/>
    </ligand>
</feature>
<feature type="binding site" evidence="1">
    <location>
        <position position="191"/>
    </location>
    <ligand>
        <name>substrate</name>
    </ligand>
</feature>
<gene>
    <name evidence="1" type="primary">thiM1</name>
    <name type="ordered locus">CLB_0491</name>
</gene>
<reference key="1">
    <citation type="journal article" date="2007" name="PLoS ONE">
        <title>Analysis of the neurotoxin complex genes in Clostridium botulinum A1-A4 and B1 strains: BoNT/A3, /Ba4 and /B1 clusters are located within plasmids.</title>
        <authorList>
            <person name="Smith T.J."/>
            <person name="Hill K.K."/>
            <person name="Foley B.T."/>
            <person name="Detter J.C."/>
            <person name="Munk A.C."/>
            <person name="Bruce D.C."/>
            <person name="Doggett N.A."/>
            <person name="Smith L.A."/>
            <person name="Marks J.D."/>
            <person name="Xie G."/>
            <person name="Brettin T.S."/>
        </authorList>
    </citation>
    <scope>NUCLEOTIDE SEQUENCE [LARGE SCALE GENOMIC DNA]</scope>
    <source>
        <strain>ATCC 19397 / Type A</strain>
    </source>
</reference>
<comment type="function">
    <text evidence="1">Catalyzes the phosphorylation of the hydroxyl group of 4-methyl-5-beta-hydroxyethylthiazole (THZ).</text>
</comment>
<comment type="catalytic activity">
    <reaction evidence="1">
        <text>5-(2-hydroxyethyl)-4-methylthiazole + ATP = 4-methyl-5-(2-phosphooxyethyl)-thiazole + ADP + H(+)</text>
        <dbReference type="Rhea" id="RHEA:24212"/>
        <dbReference type="ChEBI" id="CHEBI:15378"/>
        <dbReference type="ChEBI" id="CHEBI:17957"/>
        <dbReference type="ChEBI" id="CHEBI:30616"/>
        <dbReference type="ChEBI" id="CHEBI:58296"/>
        <dbReference type="ChEBI" id="CHEBI:456216"/>
        <dbReference type="EC" id="2.7.1.50"/>
    </reaction>
</comment>
<comment type="cofactor">
    <cofactor evidence="1">
        <name>Mg(2+)</name>
        <dbReference type="ChEBI" id="CHEBI:18420"/>
    </cofactor>
</comment>
<comment type="pathway">
    <text evidence="1">Cofactor biosynthesis; thiamine diphosphate biosynthesis; 4-methyl-5-(2-phosphoethyl)-thiazole from 5-(2-hydroxyethyl)-4-methylthiazole: step 1/1.</text>
</comment>
<comment type="similarity">
    <text evidence="1">Belongs to the Thz kinase family.</text>
</comment>
<protein>
    <recommendedName>
        <fullName evidence="1">Hydroxyethylthiazole kinase 1</fullName>
        <ecNumber evidence="1">2.7.1.50</ecNumber>
    </recommendedName>
    <alternativeName>
        <fullName evidence="1">4-methyl-5-beta-hydroxyethylthiazole kinase 1</fullName>
        <shortName evidence="1">TH kinase 1</shortName>
        <shortName evidence="1">Thz kinase 1</shortName>
    </alternativeName>
</protein>
<proteinExistence type="inferred from homology"/>
<evidence type="ECO:0000255" key="1">
    <source>
        <dbReference type="HAMAP-Rule" id="MF_00228"/>
    </source>
</evidence>
<accession>A7FPT1</accession>
<keyword id="KW-0067">ATP-binding</keyword>
<keyword id="KW-0418">Kinase</keyword>
<keyword id="KW-0460">Magnesium</keyword>
<keyword id="KW-0479">Metal-binding</keyword>
<keyword id="KW-0547">Nucleotide-binding</keyword>
<keyword id="KW-0784">Thiamine biosynthesis</keyword>
<keyword id="KW-0808">Transferase</keyword>
<organism>
    <name type="scientific">Clostridium botulinum (strain ATCC 19397 / Type A)</name>
    <dbReference type="NCBI Taxonomy" id="441770"/>
    <lineage>
        <taxon>Bacteria</taxon>
        <taxon>Bacillati</taxon>
        <taxon>Bacillota</taxon>
        <taxon>Clostridia</taxon>
        <taxon>Eubacteriales</taxon>
        <taxon>Clostridiaceae</taxon>
        <taxon>Clostridium</taxon>
    </lineage>
</organism>